<accession>Q5HJG9</accession>
<comment type="subcellular location">
    <subcellularLocation>
        <location evidence="2">Cell membrane</location>
        <topology evidence="2">Single-pass membrane protein</topology>
    </subcellularLocation>
</comment>
<comment type="similarity">
    <text evidence="2">Belongs to the staphylococcal tandem lipoprotein family.</text>
</comment>
<evidence type="ECO:0000255" key="1"/>
<evidence type="ECO:0000305" key="2"/>
<name>Y189_STAAC</name>
<keyword id="KW-1003">Cell membrane</keyword>
<keyword id="KW-0472">Membrane</keyword>
<keyword id="KW-0812">Transmembrane</keyword>
<keyword id="KW-1133">Transmembrane helix</keyword>
<reference key="1">
    <citation type="journal article" date="2005" name="J. Bacteriol.">
        <title>Insights on evolution of virulence and resistance from the complete genome analysis of an early methicillin-resistant Staphylococcus aureus strain and a biofilm-producing methicillin-resistant Staphylococcus epidermidis strain.</title>
        <authorList>
            <person name="Gill S.R."/>
            <person name="Fouts D.E."/>
            <person name="Archer G.L."/>
            <person name="Mongodin E.F."/>
            <person name="DeBoy R.T."/>
            <person name="Ravel J."/>
            <person name="Paulsen I.T."/>
            <person name="Kolonay J.F."/>
            <person name="Brinkac L.M."/>
            <person name="Beanan M.J."/>
            <person name="Dodson R.J."/>
            <person name="Daugherty S.C."/>
            <person name="Madupu R."/>
            <person name="Angiuoli S.V."/>
            <person name="Durkin A.S."/>
            <person name="Haft D.H."/>
            <person name="Vamathevan J.J."/>
            <person name="Khouri H."/>
            <person name="Utterback T.R."/>
            <person name="Lee C."/>
            <person name="Dimitrov G."/>
            <person name="Jiang L."/>
            <person name="Qin H."/>
            <person name="Weidman J."/>
            <person name="Tran K."/>
            <person name="Kang K.H."/>
            <person name="Hance I.R."/>
            <person name="Nelson K.E."/>
            <person name="Fraser C.M."/>
        </authorList>
    </citation>
    <scope>NUCLEOTIDE SEQUENCE [LARGE SCALE GENOMIC DNA]</scope>
    <source>
        <strain>COL</strain>
    </source>
</reference>
<sequence>MKAHKIFWLNLAAIIIISIVVSGDMFLAMKWEQIHLKDGLKKVLSTYPIKNLETLYEIDGHDNPHYENNDQDTWYIESSYSVVGSDELLKEDRMLLKVDKNTHKITGEYDTTTNDKKNATDSTYKSYPVKVVNNKIVFTKDVKDPALKQKIENNQFLIQSGDLTSILNSNDLKVTHDPTTDYYNLSGKLSNDNPNVKQLKRRYNIPKNASTKVELKGMSDLKGNNHQDQKLYFYFSSPGKDQIIYKESLTYNKISEH</sequence>
<protein>
    <recommendedName>
        <fullName>Uncharacterized protein SACOL0189</fullName>
    </recommendedName>
</protein>
<organism>
    <name type="scientific">Staphylococcus aureus (strain COL)</name>
    <dbReference type="NCBI Taxonomy" id="93062"/>
    <lineage>
        <taxon>Bacteria</taxon>
        <taxon>Bacillati</taxon>
        <taxon>Bacillota</taxon>
        <taxon>Bacilli</taxon>
        <taxon>Bacillales</taxon>
        <taxon>Staphylococcaceae</taxon>
        <taxon>Staphylococcus</taxon>
    </lineage>
</organism>
<feature type="chain" id="PRO_0000282105" description="Uncharacterized protein SACOL0189">
    <location>
        <begin position="1"/>
        <end position="257"/>
    </location>
</feature>
<feature type="transmembrane region" description="Helical" evidence="1">
    <location>
        <begin position="6"/>
        <end position="26"/>
    </location>
</feature>
<gene>
    <name type="ordered locus">SACOL0189</name>
</gene>
<dbReference type="EMBL" id="CP000046">
    <property type="protein sequence ID" value="AAW37485.1"/>
    <property type="molecule type" value="Genomic_DNA"/>
</dbReference>
<dbReference type="RefSeq" id="WP_000643615.1">
    <property type="nucleotide sequence ID" value="NZ_JBGOFO010000001.1"/>
</dbReference>
<dbReference type="SMR" id="Q5HJG9"/>
<dbReference type="KEGG" id="sac:SACOL0189"/>
<dbReference type="HOGENOM" id="CLU_071589_0_1_9"/>
<dbReference type="Proteomes" id="UP000000530">
    <property type="component" value="Chromosome"/>
</dbReference>
<dbReference type="GO" id="GO:0005886">
    <property type="term" value="C:plasma membrane"/>
    <property type="evidence" value="ECO:0007669"/>
    <property type="project" value="UniProtKB-SubCell"/>
</dbReference>
<dbReference type="Gene3D" id="2.50.20.40">
    <property type="match status" value="1"/>
</dbReference>
<dbReference type="InterPro" id="IPR007595">
    <property type="entry name" value="Csa"/>
</dbReference>
<dbReference type="InterPro" id="IPR038641">
    <property type="entry name" value="Csa_sf"/>
</dbReference>
<dbReference type="NCBIfam" id="TIGR01742">
    <property type="entry name" value="SA_tandem_lipo"/>
    <property type="match status" value="1"/>
</dbReference>
<dbReference type="Pfam" id="PF04507">
    <property type="entry name" value="DUF576"/>
    <property type="match status" value="1"/>
</dbReference>
<proteinExistence type="inferred from homology"/>